<reference key="1">
    <citation type="journal article" date="2005" name="Nature">
        <title>Genome sequence, comparative analysis and haplotype structure of the domestic dog.</title>
        <authorList>
            <person name="Lindblad-Toh K."/>
            <person name="Wade C.M."/>
            <person name="Mikkelsen T.S."/>
            <person name="Karlsson E.K."/>
            <person name="Jaffe D.B."/>
            <person name="Kamal M."/>
            <person name="Clamp M."/>
            <person name="Chang J.L."/>
            <person name="Kulbokas E.J. III"/>
            <person name="Zody M.C."/>
            <person name="Mauceli E."/>
            <person name="Xie X."/>
            <person name="Breen M."/>
            <person name="Wayne R.K."/>
            <person name="Ostrander E.A."/>
            <person name="Ponting C.P."/>
            <person name="Galibert F."/>
            <person name="Smith D.R."/>
            <person name="deJong P.J."/>
            <person name="Kirkness E.F."/>
            <person name="Alvarez P."/>
            <person name="Biagi T."/>
            <person name="Brockman W."/>
            <person name="Butler J."/>
            <person name="Chin C.-W."/>
            <person name="Cook A."/>
            <person name="Cuff J."/>
            <person name="Daly M.J."/>
            <person name="DeCaprio D."/>
            <person name="Gnerre S."/>
            <person name="Grabherr M."/>
            <person name="Kellis M."/>
            <person name="Kleber M."/>
            <person name="Bardeleben C."/>
            <person name="Goodstadt L."/>
            <person name="Heger A."/>
            <person name="Hitte C."/>
            <person name="Kim L."/>
            <person name="Koepfli K.-P."/>
            <person name="Parker H.G."/>
            <person name="Pollinger J.P."/>
            <person name="Searle S.M.J."/>
            <person name="Sutter N.B."/>
            <person name="Thomas R."/>
            <person name="Webber C."/>
            <person name="Baldwin J."/>
            <person name="Abebe A."/>
            <person name="Abouelleil A."/>
            <person name="Aftuck L."/>
            <person name="Ait-Zahra M."/>
            <person name="Aldredge T."/>
            <person name="Allen N."/>
            <person name="An P."/>
            <person name="Anderson S."/>
            <person name="Antoine C."/>
            <person name="Arachchi H."/>
            <person name="Aslam A."/>
            <person name="Ayotte L."/>
            <person name="Bachantsang P."/>
            <person name="Barry A."/>
            <person name="Bayul T."/>
            <person name="Benamara M."/>
            <person name="Berlin A."/>
            <person name="Bessette D."/>
            <person name="Blitshteyn B."/>
            <person name="Bloom T."/>
            <person name="Blye J."/>
            <person name="Boguslavskiy L."/>
            <person name="Bonnet C."/>
            <person name="Boukhgalter B."/>
            <person name="Brown A."/>
            <person name="Cahill P."/>
            <person name="Calixte N."/>
            <person name="Camarata J."/>
            <person name="Cheshatsang Y."/>
            <person name="Chu J."/>
            <person name="Citroen M."/>
            <person name="Collymore A."/>
            <person name="Cooke P."/>
            <person name="Dawoe T."/>
            <person name="Daza R."/>
            <person name="Decktor K."/>
            <person name="DeGray S."/>
            <person name="Dhargay N."/>
            <person name="Dooley K."/>
            <person name="Dooley K."/>
            <person name="Dorje P."/>
            <person name="Dorjee K."/>
            <person name="Dorris L."/>
            <person name="Duffey N."/>
            <person name="Dupes A."/>
            <person name="Egbiremolen O."/>
            <person name="Elong R."/>
            <person name="Falk J."/>
            <person name="Farina A."/>
            <person name="Faro S."/>
            <person name="Ferguson D."/>
            <person name="Ferreira P."/>
            <person name="Fisher S."/>
            <person name="FitzGerald M."/>
            <person name="Foley K."/>
            <person name="Foley C."/>
            <person name="Franke A."/>
            <person name="Friedrich D."/>
            <person name="Gage D."/>
            <person name="Garber M."/>
            <person name="Gearin G."/>
            <person name="Giannoukos G."/>
            <person name="Goode T."/>
            <person name="Goyette A."/>
            <person name="Graham J."/>
            <person name="Grandbois E."/>
            <person name="Gyaltsen K."/>
            <person name="Hafez N."/>
            <person name="Hagopian D."/>
            <person name="Hagos B."/>
            <person name="Hall J."/>
            <person name="Healy C."/>
            <person name="Hegarty R."/>
            <person name="Honan T."/>
            <person name="Horn A."/>
            <person name="Houde N."/>
            <person name="Hughes L."/>
            <person name="Hunnicutt L."/>
            <person name="Husby M."/>
            <person name="Jester B."/>
            <person name="Jones C."/>
            <person name="Kamat A."/>
            <person name="Kanga B."/>
            <person name="Kells C."/>
            <person name="Khazanovich D."/>
            <person name="Kieu A.C."/>
            <person name="Kisner P."/>
            <person name="Kumar M."/>
            <person name="Lance K."/>
            <person name="Landers T."/>
            <person name="Lara M."/>
            <person name="Lee W."/>
            <person name="Leger J.-P."/>
            <person name="Lennon N."/>
            <person name="Leuper L."/>
            <person name="LeVine S."/>
            <person name="Liu J."/>
            <person name="Liu X."/>
            <person name="Lokyitsang Y."/>
            <person name="Lokyitsang T."/>
            <person name="Lui A."/>
            <person name="Macdonald J."/>
            <person name="Major J."/>
            <person name="Marabella R."/>
            <person name="Maru K."/>
            <person name="Matthews C."/>
            <person name="McDonough S."/>
            <person name="Mehta T."/>
            <person name="Meldrim J."/>
            <person name="Melnikov A."/>
            <person name="Meneus L."/>
            <person name="Mihalev A."/>
            <person name="Mihova T."/>
            <person name="Miller K."/>
            <person name="Mittelman R."/>
            <person name="Mlenga V."/>
            <person name="Mulrain L."/>
            <person name="Munson G."/>
            <person name="Navidi A."/>
            <person name="Naylor J."/>
            <person name="Nguyen T."/>
            <person name="Nguyen N."/>
            <person name="Nguyen C."/>
            <person name="Nguyen T."/>
            <person name="Nicol R."/>
            <person name="Norbu N."/>
            <person name="Norbu C."/>
            <person name="Novod N."/>
            <person name="Nyima T."/>
            <person name="Olandt P."/>
            <person name="O'Neill B."/>
            <person name="O'Neill K."/>
            <person name="Osman S."/>
            <person name="Oyono L."/>
            <person name="Patti C."/>
            <person name="Perrin D."/>
            <person name="Phunkhang P."/>
            <person name="Pierre F."/>
            <person name="Priest M."/>
            <person name="Rachupka A."/>
            <person name="Raghuraman S."/>
            <person name="Rameau R."/>
            <person name="Ray V."/>
            <person name="Raymond C."/>
            <person name="Rege F."/>
            <person name="Rise C."/>
            <person name="Rogers J."/>
            <person name="Rogov P."/>
            <person name="Sahalie J."/>
            <person name="Settipalli S."/>
            <person name="Sharpe T."/>
            <person name="Shea T."/>
            <person name="Sheehan M."/>
            <person name="Sherpa N."/>
            <person name="Shi J."/>
            <person name="Shih D."/>
            <person name="Sloan J."/>
            <person name="Smith C."/>
            <person name="Sparrow T."/>
            <person name="Stalker J."/>
            <person name="Stange-Thomann N."/>
            <person name="Stavropoulos S."/>
            <person name="Stone C."/>
            <person name="Stone S."/>
            <person name="Sykes S."/>
            <person name="Tchuinga P."/>
            <person name="Tenzing P."/>
            <person name="Tesfaye S."/>
            <person name="Thoulutsang D."/>
            <person name="Thoulutsang Y."/>
            <person name="Topham K."/>
            <person name="Topping I."/>
            <person name="Tsamla T."/>
            <person name="Vassiliev H."/>
            <person name="Venkataraman V."/>
            <person name="Vo A."/>
            <person name="Wangchuk T."/>
            <person name="Wangdi T."/>
            <person name="Weiand M."/>
            <person name="Wilkinson J."/>
            <person name="Wilson A."/>
            <person name="Yadav S."/>
            <person name="Yang S."/>
            <person name="Yang X."/>
            <person name="Young G."/>
            <person name="Yu Q."/>
            <person name="Zainoun J."/>
            <person name="Zembek L."/>
            <person name="Zimmer A."/>
            <person name="Lander E.S."/>
        </authorList>
    </citation>
    <scope>NUCLEOTIDE SEQUENCE [LARGE SCALE GENOMIC DNA]</scope>
    <source>
        <strain>Boxer</strain>
    </source>
</reference>
<reference key="2">
    <citation type="journal article" date="2000" name="Biochim. Biophys. Acta">
        <title>Molecular cloning of canine bullous pemphigoid antigen 2 cDNA and immunomapping of NC16A domain by canine bullous pemphigoid autoantibodies.</title>
        <authorList>
            <person name="Xu L."/>
            <person name="O'Toole E.A."/>
            <person name="Olivry T."/>
            <person name="Hernandez C."/>
            <person name="Peng J."/>
            <person name="Chen M."/>
            <person name="Chan L.S."/>
        </authorList>
    </citation>
    <scope>NUCLEOTIDE SEQUENCE [MRNA] OF 1-708</scope>
    <scope>TISSUE SPECIFICITY</scope>
    <scope>DISEASE</scope>
    <source>
        <tissue>Squamous cell carcinoma</tissue>
    </source>
</reference>
<feature type="chain" id="PRO_0000059405" description="Collagen alpha-1(XVII) chain">
    <location>
        <begin position="1"/>
        <end position="1597"/>
    </location>
</feature>
<feature type="chain" id="PRO_0000342554" description="120 kDa linear IgA disease antigen homolog" evidence="1">
    <location>
        <begin position="525"/>
        <end position="1597"/>
    </location>
</feature>
<feature type="topological domain" description="Cytoplasmic" evidence="2">
    <location>
        <begin position="1"/>
        <end position="468"/>
    </location>
</feature>
<feature type="transmembrane region" description="Helical; Signal-anchor for type II membrane protein" evidence="2">
    <location>
        <begin position="469"/>
        <end position="489"/>
    </location>
</feature>
<feature type="topological domain" description="Extracellular" evidence="2">
    <location>
        <begin position="490"/>
        <end position="1597"/>
    </location>
</feature>
<feature type="region of interest" description="Nonhelical region (NC16A)">
    <location>
        <begin position="1"/>
        <end position="567"/>
    </location>
</feature>
<feature type="region of interest" description="Disordered" evidence="3">
    <location>
        <begin position="1"/>
        <end position="155"/>
    </location>
</feature>
<feature type="region of interest" description="Necessary for interaction with DST and for the recruitment of DST to hemidesmosome" evidence="1">
    <location>
        <begin position="146"/>
        <end position="231"/>
    </location>
</feature>
<feature type="region of interest" description="Disordered" evidence="3">
    <location>
        <begin position="168"/>
        <end position="188"/>
    </location>
</feature>
<feature type="region of interest" description="Disordered" evidence="3">
    <location>
        <begin position="562"/>
        <end position="857"/>
    </location>
</feature>
<feature type="region of interest" description="Triple-helical region">
    <location>
        <begin position="568"/>
        <end position="1572"/>
    </location>
</feature>
<feature type="region of interest" description="Disordered" evidence="3">
    <location>
        <begin position="907"/>
        <end position="927"/>
    </location>
</feature>
<feature type="region of interest" description="Disordered" evidence="3">
    <location>
        <begin position="970"/>
        <end position="1041"/>
    </location>
</feature>
<feature type="region of interest" description="Disordered" evidence="3">
    <location>
        <begin position="1289"/>
        <end position="1316"/>
    </location>
</feature>
<feature type="region of interest" description="Disordered" evidence="3">
    <location>
        <begin position="1344"/>
        <end position="1394"/>
    </location>
</feature>
<feature type="region of interest" description="Disordered" evidence="3">
    <location>
        <begin position="1531"/>
        <end position="1566"/>
    </location>
</feature>
<feature type="region of interest" description="Nonhelical region (NC1)">
    <location>
        <begin position="1573"/>
        <end position="1597"/>
    </location>
</feature>
<feature type="compositionally biased region" description="Basic and acidic residues" evidence="3">
    <location>
        <begin position="9"/>
        <end position="19"/>
    </location>
</feature>
<feature type="compositionally biased region" description="Polar residues" evidence="3">
    <location>
        <begin position="58"/>
        <end position="96"/>
    </location>
</feature>
<feature type="compositionally biased region" description="Polar residues" evidence="3">
    <location>
        <begin position="111"/>
        <end position="120"/>
    </location>
</feature>
<feature type="compositionally biased region" description="Polar residues" evidence="3">
    <location>
        <begin position="170"/>
        <end position="184"/>
    </location>
</feature>
<feature type="compositionally biased region" description="Low complexity" evidence="3">
    <location>
        <begin position="604"/>
        <end position="632"/>
    </location>
</feature>
<feature type="compositionally biased region" description="Gly residues" evidence="3">
    <location>
        <begin position="665"/>
        <end position="674"/>
    </location>
</feature>
<feature type="compositionally biased region" description="Low complexity" evidence="3">
    <location>
        <begin position="730"/>
        <end position="748"/>
    </location>
</feature>
<feature type="compositionally biased region" description="Low complexity" evidence="3">
    <location>
        <begin position="774"/>
        <end position="796"/>
    </location>
</feature>
<feature type="compositionally biased region" description="Pro residues" evidence="3">
    <location>
        <begin position="820"/>
        <end position="838"/>
    </location>
</feature>
<feature type="compositionally biased region" description="Low complexity" evidence="3">
    <location>
        <begin position="847"/>
        <end position="857"/>
    </location>
</feature>
<feature type="compositionally biased region" description="Pro residues" evidence="3">
    <location>
        <begin position="910"/>
        <end position="922"/>
    </location>
</feature>
<feature type="compositionally biased region" description="Pro residues" evidence="3">
    <location>
        <begin position="977"/>
        <end position="986"/>
    </location>
</feature>
<feature type="compositionally biased region" description="Pro residues" evidence="3">
    <location>
        <begin position="1023"/>
        <end position="1035"/>
    </location>
</feature>
<feature type="compositionally biased region" description="Pro residues" evidence="3">
    <location>
        <begin position="1296"/>
        <end position="1310"/>
    </location>
</feature>
<feature type="compositionally biased region" description="Pro residues" evidence="3">
    <location>
        <begin position="1348"/>
        <end position="1357"/>
    </location>
</feature>
<feature type="compositionally biased region" description="Low complexity" evidence="3">
    <location>
        <begin position="1377"/>
        <end position="1393"/>
    </location>
</feature>
<feature type="compositionally biased region" description="Basic and acidic residues" evidence="3">
    <location>
        <begin position="1537"/>
        <end position="1557"/>
    </location>
</feature>
<feature type="glycosylation site" description="N-linked (GlcNAc...) asparagine" evidence="2">
    <location>
        <position position="1493"/>
    </location>
</feature>
<feature type="sequence conflict" description="In Ref. 2; AAC27985." evidence="5" ref="2">
    <original>R</original>
    <variation>G</variation>
    <location>
        <position position="100"/>
    </location>
</feature>
<feature type="sequence conflict" description="In Ref. 2; AAC27985." evidence="5" ref="2">
    <original>N</original>
    <variation>D</variation>
    <location>
        <position position="179"/>
    </location>
</feature>
<feature type="sequence conflict" description="In Ref. 2; AAC27985." evidence="5" ref="2">
    <original>G</original>
    <variation>EA</variation>
    <location>
        <position position="536"/>
    </location>
</feature>
<feature type="sequence conflict" description="In Ref. 2; AAC27985." evidence="5" ref="2">
    <original>R</original>
    <variation>K</variation>
    <location>
        <position position="623"/>
    </location>
</feature>
<keyword id="KW-0084">Basement membrane</keyword>
<keyword id="KW-0965">Cell junction</keyword>
<keyword id="KW-0176">Collagen</keyword>
<keyword id="KW-1015">Disulfide bond</keyword>
<keyword id="KW-0272">Extracellular matrix</keyword>
<keyword id="KW-0325">Glycoprotein</keyword>
<keyword id="KW-0379">Hydroxylation</keyword>
<keyword id="KW-0472">Membrane</keyword>
<keyword id="KW-1185">Reference proteome</keyword>
<keyword id="KW-0677">Repeat</keyword>
<keyword id="KW-0964">Secreted</keyword>
<keyword id="KW-0735">Signal-anchor</keyword>
<keyword id="KW-0812">Transmembrane</keyword>
<keyword id="KW-1133">Transmembrane helix</keyword>
<organism>
    <name type="scientific">Canis lupus familiaris</name>
    <name type="common">Dog</name>
    <name type="synonym">Canis familiaris</name>
    <dbReference type="NCBI Taxonomy" id="9615"/>
    <lineage>
        <taxon>Eukaryota</taxon>
        <taxon>Metazoa</taxon>
        <taxon>Chordata</taxon>
        <taxon>Craniata</taxon>
        <taxon>Vertebrata</taxon>
        <taxon>Euteleostomi</taxon>
        <taxon>Mammalia</taxon>
        <taxon>Eutheria</taxon>
        <taxon>Laurasiatheria</taxon>
        <taxon>Carnivora</taxon>
        <taxon>Caniformia</taxon>
        <taxon>Canidae</taxon>
        <taxon>Canis</taxon>
    </lineage>
</organism>
<dbReference type="EMBL" id="AAEX02015518">
    <property type="status" value="NOT_ANNOTATED_CDS"/>
    <property type="molecule type" value="Genomic_DNA"/>
</dbReference>
<dbReference type="EMBL" id="AF016649">
    <property type="protein sequence ID" value="AAC27985.2"/>
    <property type="molecule type" value="mRNA"/>
</dbReference>
<dbReference type="FunCoup" id="Q9N281">
    <property type="interactions" value="12"/>
</dbReference>
<dbReference type="STRING" id="9615.ENSCAFP00000037321"/>
<dbReference type="GlyCosmos" id="Q9N281">
    <property type="glycosylation" value="1 site, No reported glycans"/>
</dbReference>
<dbReference type="PaxDb" id="9612-ENSCAFP00000037321"/>
<dbReference type="eggNOG" id="KOG3544">
    <property type="taxonomic scope" value="Eukaryota"/>
</dbReference>
<dbReference type="InParanoid" id="Q9N281"/>
<dbReference type="OMA" id="YRQTQSP"/>
<dbReference type="OrthoDB" id="9950082at2759"/>
<dbReference type="TreeFam" id="TF332289"/>
<dbReference type="Proteomes" id="UP000002254">
    <property type="component" value="Chromosome 28"/>
</dbReference>
<dbReference type="Proteomes" id="UP000694429">
    <property type="component" value="Unplaced"/>
</dbReference>
<dbReference type="Proteomes" id="UP000694542">
    <property type="component" value="Unplaced"/>
</dbReference>
<dbReference type="Proteomes" id="UP000805418">
    <property type="component" value="Unplaced"/>
</dbReference>
<dbReference type="Bgee" id="ENSCAFG00000010547">
    <property type="expression patterns" value="Expressed in keratinocyte and 38 other cell types or tissues"/>
</dbReference>
<dbReference type="GO" id="GO:0005604">
    <property type="term" value="C:basement membrane"/>
    <property type="evidence" value="ECO:0007669"/>
    <property type="project" value="UniProtKB-SubCell"/>
</dbReference>
<dbReference type="GO" id="GO:0005581">
    <property type="term" value="C:collagen trimer"/>
    <property type="evidence" value="ECO:0007669"/>
    <property type="project" value="UniProtKB-KW"/>
</dbReference>
<dbReference type="GO" id="GO:0062023">
    <property type="term" value="C:collagen-containing extracellular matrix"/>
    <property type="evidence" value="ECO:0000318"/>
    <property type="project" value="GO_Central"/>
</dbReference>
<dbReference type="GO" id="GO:0005615">
    <property type="term" value="C:extracellular space"/>
    <property type="evidence" value="ECO:0000318"/>
    <property type="project" value="GO_Central"/>
</dbReference>
<dbReference type="GO" id="GO:0030056">
    <property type="term" value="C:hemidesmosome"/>
    <property type="evidence" value="ECO:0000250"/>
    <property type="project" value="UniProtKB"/>
</dbReference>
<dbReference type="GO" id="GO:0016020">
    <property type="term" value="C:membrane"/>
    <property type="evidence" value="ECO:0007669"/>
    <property type="project" value="UniProtKB-SubCell"/>
</dbReference>
<dbReference type="GO" id="GO:0030020">
    <property type="term" value="F:extracellular matrix structural constituent conferring tensile strength"/>
    <property type="evidence" value="ECO:0000318"/>
    <property type="project" value="GO_Central"/>
</dbReference>
<dbReference type="GO" id="GO:0031581">
    <property type="term" value="P:hemidesmosome assembly"/>
    <property type="evidence" value="ECO:0000250"/>
    <property type="project" value="UniProtKB"/>
</dbReference>
<dbReference type="FunFam" id="1.20.5.320:FF:000009">
    <property type="entry name" value="Collagen alpha-1(XVII) chain"/>
    <property type="match status" value="1"/>
</dbReference>
<dbReference type="FunFam" id="1.20.5.320:FF:000003">
    <property type="entry name" value="Collagen, type XVII, alpha 1"/>
    <property type="match status" value="1"/>
</dbReference>
<dbReference type="Gene3D" id="1.20.5.320">
    <property type="entry name" value="6-Phosphogluconate Dehydrogenase, domain 3"/>
    <property type="match status" value="3"/>
</dbReference>
<dbReference type="InterPro" id="IPR008160">
    <property type="entry name" value="Collagen"/>
</dbReference>
<dbReference type="InterPro" id="IPR050149">
    <property type="entry name" value="Collagen_superfamily"/>
</dbReference>
<dbReference type="PANTHER" id="PTHR24023">
    <property type="entry name" value="COLLAGEN ALPHA"/>
    <property type="match status" value="1"/>
</dbReference>
<dbReference type="PANTHER" id="PTHR24023:SF891">
    <property type="entry name" value="COLLAGEN ALPHA-1(XVII) CHAIN"/>
    <property type="match status" value="1"/>
</dbReference>
<dbReference type="Pfam" id="PF01391">
    <property type="entry name" value="Collagen"/>
    <property type="match status" value="3"/>
</dbReference>
<comment type="function">
    <text evidence="1">The 120 kDa linear IgA disease antigen homolog is an anchoring filament component involved in dermal-epidermal cohesion.</text>
</comment>
<comment type="subunit">
    <text evidence="1">Homotrimers of alpha 1(XVII)chains. Interacts (via cytoplasmic region) with ITGB4 (via cytoplasmic region). Interacts (via cytoplasmic region) with DST (via N-terminus). Interacts (via N-terminus) with PLEC. Interacts (via cytoplasmic region) with DSP (By similarity).</text>
</comment>
<comment type="subcellular location">
    <subcellularLocation>
        <location>Cell junction</location>
        <location>Hemidesmosome</location>
    </subcellularLocation>
    <subcellularLocation>
        <location>Membrane</location>
        <topology>Single-pass type II membrane protein</topology>
    </subcellularLocation>
    <text evidence="1">Localized along the plasma membrane of the hemidesmosome.</text>
</comment>
<comment type="subcellular location">
    <molecule>120 kDa linear IgA disease antigen homolog</molecule>
    <subcellularLocation>
        <location evidence="1">Secreted</location>
        <location evidence="1">Extracellular space</location>
        <location evidence="1">Extracellular matrix</location>
        <location evidence="1">Basement membrane</location>
    </subcellularLocation>
</comment>
<comment type="tissue specificity">
    <text evidence="4">Upper lamina lucidalhemidesmosome.</text>
</comment>
<comment type="PTM">
    <text evidence="1">The intracellular/endo domain is disulfide-linked.</text>
</comment>
<comment type="PTM">
    <text>Prolines at the third position of the tripeptide repeating unit (G-X-Y) are hydroxylated in some or all of the chains.</text>
</comment>
<comment type="PTM">
    <text evidence="1">The ectodomain is shedded from the surface of keratinocytes resulting in a 120-kDa soluble form, also named as 120 kDa linear IgA disease antigen homolog. The shedding is mediated by membrane-bound metalloproteases (By similarity).</text>
</comment>
<comment type="disease">
    <text evidence="4">Defects in COL17A1 are the cause of generalized atrophic benign epidermolysis bullosa. This nonlethal form of junctional epidermolysis bullosa is characterized by life-long blistering of the skin, associated with hair and tooth abnormalities.</text>
</comment>
<accession>Q9N281</accession>
<proteinExistence type="evidence at transcript level"/>
<protein>
    <recommendedName>
        <fullName>Collagen alpha-1(XVII) chain</fullName>
    </recommendedName>
    <alternativeName>
        <fullName>180 kDa bullous pemphigoid antigen 2</fullName>
    </alternativeName>
    <alternativeName>
        <fullName>Bullous pemphigoid antigen 2</fullName>
    </alternativeName>
    <component>
        <recommendedName>
            <fullName>120 kDa linear IgA disease antigen homolog</fullName>
        </recommendedName>
    </component>
</protein>
<gene>
    <name type="primary">COL17A1</name>
    <name type="synonym">BP180</name>
    <name type="synonym">BPAG2</name>
</gene>
<sequence>MDVTKKNKRDGSEVTERIITETVSTRLTSLPPKGGTSNGYAKTGSLSGGSRLEKHSLTHGSSGYINSSGSTRGNASTSSYRRAHSPASTLPNSPGSTFERKIHITRHGTYEGSSSGNSSPEYPRKEFASSSTRGRSQTRESEIRVRLQSASPSTRWTELDDVKRLLKGSRSASVSPTRNSSNTLPIPKKGTVETKMVTASSQSVSGTYDATILDANLPSHMWSSTLPAGSSMGTYHNNVTTQSSSLLNTNAYSAGSVFGVPNNMTSGSSTLHPGVSTCSSVFGMQNNLAPSSSTLSHSTATASTAYGMKKNLPQSPAVVSTGVSTSAACTTNVQNEDLLHKDCKFLILEKDNTPAKKEMELLIMTKDSGKVFTASPASIAATSFSDDTLKKEKQAAYTADTCLVSDANGDVKTVSTKGKAASAEMHNYNHRGGGSGGGGGGGGGGGGGPWGAAPAWCPCGSCCSWWKWLLGLLLTWLLLLGLLFGLIALAEEVRALKARVAELEQSRSNVLLFKEEMQRANKDWLQGEAPSVEAGGKLGLDGHQQEELWLFVRNRLMAEQENGNLRGSPGPKGDMGSQGPKGDRGLPGTPGIPGVLGHPGPQGPKGQKGSVGEPGMEGPMGQRGREGPMGPRGEPGPPGFGEKGDRGAAGEPGVQGPPGVPGSVGPKGSGGSPGPRGPPGPMGPQGLRGEVGLPGIKGDKGPLGSPGPKGDQGEKGPRGLTGEPGLRGLPGAVGEPGAKGAVGPAGPDGHQGPRGEQGLTGMPGTRGPPGPSGDPGKPGFTGPQGPQGLPGTPGRPGAKGEPGAPGRIMTSEGSSTITVPGPPGPPGAMGPPGPPGAPGPRGERGLAGESFMGSSSSISELLSTRSFKEPMQTCHRASFLEARVAKTTPALSGRHCVLDTCRKGVDLRGPPGPPGPPGPPDLPFRVRQDPEAPQVKAELPGKRYESIGTQSLGLALGKSLPATSPQHRVLETYFSGPPGPPGPPGPKGDQGSSSLGLNLQGPPGPRGPKGDKGGSSSSTMFMPGPPGPPGPPGPPGSISSSGREIQQYISEYLQSDSIRSYLSGVQGPPGPPGPPGPVTTIAGETFDYSELASRVSSYLQTSGYSIGSSVSISTEDIVAALQREYLRRAGGWEPWGLGLPLPELLRASEEALVLVPSGQGRPGCGRAVAREPCGLGGPTPALPVLAGDDVRQYLRQYVIGDWSLQSLDYAELSSRILSYMSSSGISIGLPGPPGPPGLPGTSYEELLSLLQGSEYRGIIGPPGPPGPPGIPGNAWSSISVEDLSSYLHTAGVSSIPGPPGPPGPPGPRGPPGVSGALATYAAENSDSFRSELISYLTSPDVRSFIVGPPGPPGPQGPPGDSRLVSMDGSYSRDSRSSSHSASVSRGSSYSSSMGIGGASGGSLGEAGAFGLDMGLGRGYGGAAEGGMYGGEGGPLGAGFAGGLDYNELAVRVSESLQRQGLLQGMAYTVQGPPGQPGPQGPPGISKVFSAYSNVTEDLMDFFRSKSTSVIVFLTPCCPVRGALQDHQVGLGHPALEGTREKKETKVTKSMRGGEREASPSSHELPLEEQPLASVLAMAYGVHVKISPKGGSWRLTSY</sequence>
<evidence type="ECO:0000250" key="1"/>
<evidence type="ECO:0000255" key="2"/>
<evidence type="ECO:0000256" key="3">
    <source>
        <dbReference type="SAM" id="MobiDB-lite"/>
    </source>
</evidence>
<evidence type="ECO:0000269" key="4">
    <source>
    </source>
</evidence>
<evidence type="ECO:0000305" key="5"/>
<name>COHA1_CANLF</name>